<comment type="catalytic activity">
    <reaction>
        <text>hydrogencarbonate + NH4(+) + ATP = carbamoyl phosphate + ADP + H2O + H(+)</text>
        <dbReference type="Rhea" id="RHEA:10152"/>
        <dbReference type="ChEBI" id="CHEBI:15377"/>
        <dbReference type="ChEBI" id="CHEBI:15378"/>
        <dbReference type="ChEBI" id="CHEBI:17544"/>
        <dbReference type="ChEBI" id="CHEBI:28938"/>
        <dbReference type="ChEBI" id="CHEBI:30616"/>
        <dbReference type="ChEBI" id="CHEBI:58228"/>
        <dbReference type="ChEBI" id="CHEBI:456216"/>
        <dbReference type="EC" id="2.7.2.2"/>
    </reaction>
</comment>
<comment type="pathway">
    <text>Metabolic intermediate metabolism; carbamoyl phosphate degradation; CO(2) and NH(3) from carbamoyl phosphate: step 1/1.</text>
</comment>
<comment type="subcellular location">
    <subcellularLocation>
        <location evidence="1">Cytoplasm</location>
    </subcellularLocation>
</comment>
<comment type="similarity">
    <text evidence="1">Belongs to the carbamate kinase family.</text>
</comment>
<dbReference type="EC" id="2.7.2.2"/>
<dbReference type="EMBL" id="AJ938182">
    <property type="protein sequence ID" value="CAI80722.1"/>
    <property type="molecule type" value="Genomic_DNA"/>
</dbReference>
<dbReference type="RefSeq" id="WP_001074349.1">
    <property type="nucleotide sequence ID" value="NC_007622.1"/>
</dbReference>
<dbReference type="SMR" id="Q2YXF2"/>
<dbReference type="KEGG" id="sab:SAB1034"/>
<dbReference type="HOGENOM" id="CLU_076278_0_0_9"/>
<dbReference type="UniPathway" id="UPA00996">
    <property type="reaction ID" value="UER00366"/>
</dbReference>
<dbReference type="GO" id="GO:0005829">
    <property type="term" value="C:cytosol"/>
    <property type="evidence" value="ECO:0007669"/>
    <property type="project" value="TreeGrafter"/>
</dbReference>
<dbReference type="GO" id="GO:0005524">
    <property type="term" value="F:ATP binding"/>
    <property type="evidence" value="ECO:0007669"/>
    <property type="project" value="UniProtKB-KW"/>
</dbReference>
<dbReference type="GO" id="GO:0008804">
    <property type="term" value="F:carbamate kinase activity"/>
    <property type="evidence" value="ECO:0007669"/>
    <property type="project" value="UniProtKB-EC"/>
</dbReference>
<dbReference type="GO" id="GO:0019546">
    <property type="term" value="P:arginine deiminase pathway"/>
    <property type="evidence" value="ECO:0007669"/>
    <property type="project" value="TreeGrafter"/>
</dbReference>
<dbReference type="CDD" id="cd04235">
    <property type="entry name" value="AAK_CK"/>
    <property type="match status" value="1"/>
</dbReference>
<dbReference type="FunFam" id="3.40.1160.10:FF:000007">
    <property type="entry name" value="Carbamate kinase"/>
    <property type="match status" value="1"/>
</dbReference>
<dbReference type="Gene3D" id="3.40.1160.10">
    <property type="entry name" value="Acetylglutamate kinase-like"/>
    <property type="match status" value="1"/>
</dbReference>
<dbReference type="InterPro" id="IPR036393">
    <property type="entry name" value="AceGlu_kinase-like_sf"/>
</dbReference>
<dbReference type="InterPro" id="IPR001048">
    <property type="entry name" value="Asp/Glu/Uridylate_kinase"/>
</dbReference>
<dbReference type="InterPro" id="IPR003964">
    <property type="entry name" value="Carb_kinase"/>
</dbReference>
<dbReference type="NCBIfam" id="TIGR00746">
    <property type="entry name" value="arcC"/>
    <property type="match status" value="1"/>
</dbReference>
<dbReference type="NCBIfam" id="NF009007">
    <property type="entry name" value="PRK12352.1"/>
    <property type="match status" value="1"/>
</dbReference>
<dbReference type="PANTHER" id="PTHR30409">
    <property type="entry name" value="CARBAMATE KINASE"/>
    <property type="match status" value="1"/>
</dbReference>
<dbReference type="PANTHER" id="PTHR30409:SF1">
    <property type="entry name" value="CARBAMATE KINASE-RELATED"/>
    <property type="match status" value="1"/>
</dbReference>
<dbReference type="Pfam" id="PF00696">
    <property type="entry name" value="AA_kinase"/>
    <property type="match status" value="1"/>
</dbReference>
<dbReference type="PIRSF" id="PIRSF000723">
    <property type="entry name" value="Carbamate_kin"/>
    <property type="match status" value="1"/>
</dbReference>
<dbReference type="PRINTS" id="PR01469">
    <property type="entry name" value="CARBMTKINASE"/>
</dbReference>
<dbReference type="SUPFAM" id="SSF53633">
    <property type="entry name" value="Carbamate kinase-like"/>
    <property type="match status" value="1"/>
</dbReference>
<name>ARCC1_STAAB</name>
<protein>
    <recommendedName>
        <fullName>Carbamate kinase 1</fullName>
        <ecNumber>2.7.2.2</ecNumber>
    </recommendedName>
</protein>
<gene>
    <name type="primary">arcC1</name>
    <name type="ordered locus">SAB1034</name>
</gene>
<proteinExistence type="inferred from homology"/>
<sequence length="310" mass="33595">MAKIVVALGGNALGKSPQEQLELVKNTAKSLVGLITKGHEIVISHGNGPQVGSINLGLNYAAEHNQGPAFPFAECGAMSQAYIGYQLQESLQNELHSIGMNKQVVTLVTQVEVDENDPAFNNPSKPIGLFYNKEEAEQIQKEKGFIFVEDAGRGYRRVVPSPQPISIIELESIKTLIKNDTLVIAAGGGGIPVIREQHDGFKGIDAVIDKDKTSALLGANIQCDQLIILTAIDYVYINFNTENQQPLKTTNVDELKRYIDENQFAKGSMLPKIEAAISFIENNPKGSVLITSLNELDAALEGKVGTVIKK</sequence>
<evidence type="ECO:0000305" key="1"/>
<reference key="1">
    <citation type="journal article" date="2007" name="PLoS ONE">
        <title>Molecular correlates of host specialization in Staphylococcus aureus.</title>
        <authorList>
            <person name="Herron-Olson L."/>
            <person name="Fitzgerald J.R."/>
            <person name="Musser J.M."/>
            <person name="Kapur V."/>
        </authorList>
    </citation>
    <scope>NUCLEOTIDE SEQUENCE [LARGE SCALE GENOMIC DNA]</scope>
    <source>
        <strain>bovine RF122 / ET3-1</strain>
    </source>
</reference>
<accession>Q2YXF2</accession>
<keyword id="KW-0056">Arginine metabolism</keyword>
<keyword id="KW-0067">ATP-binding</keyword>
<keyword id="KW-0963">Cytoplasm</keyword>
<keyword id="KW-0418">Kinase</keyword>
<keyword id="KW-0547">Nucleotide-binding</keyword>
<keyword id="KW-0808">Transferase</keyword>
<feature type="chain" id="PRO_0000269232" description="Carbamate kinase 1">
    <location>
        <begin position="1"/>
        <end position="310"/>
    </location>
</feature>
<organism>
    <name type="scientific">Staphylococcus aureus (strain bovine RF122 / ET3-1)</name>
    <dbReference type="NCBI Taxonomy" id="273036"/>
    <lineage>
        <taxon>Bacteria</taxon>
        <taxon>Bacillati</taxon>
        <taxon>Bacillota</taxon>
        <taxon>Bacilli</taxon>
        <taxon>Bacillales</taxon>
        <taxon>Staphylococcaceae</taxon>
        <taxon>Staphylococcus</taxon>
    </lineage>
</organism>